<comment type="function">
    <text evidence="2">Significantly diminishes the chaperonin TCP1 complex ATPase activity, thus negatively impacts protein folding, including that of actin or tubulin.</text>
</comment>
<comment type="subunit">
    <text>Forms ternary complexes with the chaperonin TCP1 complex, spanning the cylindrical chaperonin cavity and contacting at least 2 subunits.</text>
</comment>
<comment type="interaction">
    <interactant intactId="EBI-707554">
        <id>O14530</id>
    </interactant>
    <interactant intactId="EBI-946029">
        <id>Q6P1W5</id>
        <label>C1orf94</label>
    </interactant>
    <organismsDiffer>false</organismsDiffer>
    <experiments>3</experiments>
</comment>
<comment type="interaction">
    <interactant intactId="EBI-707554">
        <id>O14530</id>
    </interactant>
    <interactant intactId="EBI-2837036">
        <id>Q6ZUJ4</id>
        <label>C3orf62</label>
    </interactant>
    <organismsDiffer>false</organismsDiffer>
    <experiments>3</experiments>
</comment>
<comment type="interaction">
    <interactant intactId="EBI-707554">
        <id>O14530</id>
    </interactant>
    <interactant intactId="EBI-2548868">
        <id>P0C7W6</id>
        <label>CCDC172</label>
    </interactant>
    <organismsDiffer>false</organismsDiffer>
    <experiments>3</experiments>
</comment>
<comment type="interaction">
    <interactant intactId="EBI-707554">
        <id>O14530</id>
    </interactant>
    <interactant intactId="EBI-742887">
        <id>Q8TAP6</id>
        <label>CEP76</label>
    </interactant>
    <organismsDiffer>false</organismsDiffer>
    <experiments>3</experiments>
</comment>
<comment type="interaction">
    <interactant intactId="EBI-707554">
        <id>O14530</id>
    </interactant>
    <interactant intactId="EBI-368382">
        <id>Q9H9E3</id>
        <label>COG4</label>
    </interactant>
    <organismsDiffer>false</organismsDiffer>
    <experiments>5</experiments>
</comment>
<comment type="interaction">
    <interactant intactId="EBI-707554">
        <id>O14530</id>
    </interactant>
    <interactant intactId="EBI-740680">
        <id>Q8WWB3</id>
        <label>DYDC1</label>
    </interactant>
    <organismsDiffer>false</organismsDiffer>
    <experiments>3</experiments>
</comment>
<comment type="interaction">
    <interactant intactId="EBI-707554">
        <id>O14530</id>
    </interactant>
    <interactant intactId="EBI-371922">
        <id>Q96B26</id>
        <label>EXOSC8</label>
    </interactant>
    <organismsDiffer>false</organismsDiffer>
    <experiments>6</experiments>
</comment>
<comment type="interaction">
    <interactant intactId="EBI-707554">
        <id>O14530</id>
    </interactant>
    <interactant intactId="EBI-396435">
        <id>Q99689</id>
        <label>FEZ1</label>
    </interactant>
    <organismsDiffer>false</organismsDiffer>
    <experiments>2</experiments>
</comment>
<comment type="interaction">
    <interactant intactId="EBI-707554">
        <id>O14530</id>
    </interactant>
    <interactant intactId="EBI-948266">
        <id>O14901</id>
        <label>KLF11</label>
    </interactant>
    <organismsDiffer>false</organismsDiffer>
    <experiments>3</experiments>
</comment>
<comment type="interaction">
    <interactant intactId="EBI-707554">
        <id>O14530</id>
    </interactant>
    <interactant intactId="EBI-1216080">
        <id>Q9Y250</id>
        <label>LZTS1</label>
    </interactant>
    <organismsDiffer>false</organismsDiffer>
    <experiments>3</experiments>
</comment>
<comment type="interaction">
    <interactant intactId="EBI-707554">
        <id>O14530</id>
    </interactant>
    <interactant intactId="EBI-1045155">
        <id>P43360</id>
        <label>MAGEA6</label>
    </interactant>
    <organismsDiffer>false</organismsDiffer>
    <experiments>4</experiments>
</comment>
<comment type="interaction">
    <interactant intactId="EBI-707554">
        <id>O14530</id>
    </interactant>
    <interactant intactId="EBI-12954271">
        <id>Q15528-2</id>
        <label>MED22</label>
    </interactant>
    <organismsDiffer>false</organismsDiffer>
    <experiments>3</experiments>
</comment>
<comment type="interaction">
    <interactant intactId="EBI-707554">
        <id>O14530</id>
    </interactant>
    <interactant intactId="EBI-358272">
        <id>P52815</id>
        <label>MRPL12</label>
    </interactant>
    <organismsDiffer>false</organismsDiffer>
    <experiments>3</experiments>
</comment>
<comment type="interaction">
    <interactant intactId="EBI-707554">
        <id>O14530</id>
    </interactant>
    <interactant intactId="EBI-3906629">
        <id>P15173</id>
        <label>MYOG</label>
    </interactant>
    <organismsDiffer>false</organismsDiffer>
    <experiments>4</experiments>
</comment>
<comment type="interaction">
    <interactant intactId="EBI-707554">
        <id>O14530</id>
    </interactant>
    <interactant intactId="EBI-10302990">
        <id>Q9BYU1</id>
        <label>PBX4</label>
    </interactant>
    <organismsDiffer>false</organismsDiffer>
    <experiments>5</experiments>
</comment>
<comment type="interaction">
    <interactant intactId="EBI-707554">
        <id>O14530</id>
    </interactant>
    <interactant intactId="EBI-79165">
        <id>Q9NRD5</id>
        <label>PICK1</label>
    </interactant>
    <organismsDiffer>false</organismsDiffer>
    <experiments>3</experiments>
</comment>
<comment type="interaction">
    <interactant intactId="EBI-707554">
        <id>O14530</id>
    </interactant>
    <interactant intactId="EBI-302345">
        <id>Q8ND90</id>
        <label>PNMA1</label>
    </interactant>
    <organismsDiffer>false</organismsDiffer>
    <experiments>3</experiments>
</comment>
<comment type="interaction">
    <interactant intactId="EBI-707554">
        <id>O14530</id>
    </interactant>
    <interactant intactId="EBI-746341">
        <id>Q8N6V9</id>
        <label>TEX9</label>
    </interactant>
    <organismsDiffer>false</organismsDiffer>
    <experiments>3</experiments>
</comment>
<comment type="interaction">
    <interactant intactId="EBI-707554">
        <id>O14530</id>
    </interactant>
    <interactant intactId="EBI-21688145">
        <id>A2RUQ5</id>
        <label>TMEM132E-DT</label>
    </interactant>
    <organismsDiffer>false</organismsDiffer>
    <experiments>2</experiments>
</comment>
<comment type="interaction">
    <interactant intactId="EBI-707554">
        <id>O14530</id>
    </interactant>
    <interactant intactId="EBI-719493">
        <id>P14373</id>
        <label>TRIM27</label>
    </interactant>
    <organismsDiffer>false</organismsDiffer>
    <experiments>3</experiments>
</comment>
<comment type="interaction">
    <interactant intactId="EBI-707554">
        <id>O14530</id>
    </interactant>
    <interactant intactId="EBI-625509">
        <id>Q8N720</id>
        <label>ZNF655</label>
    </interactant>
    <organismsDiffer>false</organismsDiffer>
    <experiments>3</experiments>
</comment>
<comment type="subcellular location">
    <subcellularLocation>
        <location evidence="1">Cytoplasm</location>
    </subcellularLocation>
    <subcellularLocation>
        <location evidence="1">Nucleus</location>
    </subcellularLocation>
    <subcellularLocation>
        <location evidence="1">Cytoplasm</location>
        <location evidence="1">Cytoskeleton</location>
        <location evidence="1">Microtubule organizing center</location>
        <location evidence="1">Centrosome</location>
    </subcellularLocation>
    <subcellularLocation>
        <location evidence="1">Midbody</location>
    </subcellularLocation>
    <text evidence="1">Co-localizes with beta-tubulin in the centrosome.</text>
</comment>
<comment type="alternative products">
    <event type="alternative splicing"/>
    <isoform>
        <id>O14530-1</id>
        <name>1</name>
        <sequence type="displayed"/>
    </isoform>
    <isoform>
        <id>O14530-2</id>
        <name>2</name>
        <sequence type="described" ref="VSP_056553"/>
    </isoform>
</comment>
<accession>O14530</accession>
<accession>B2R9G8</accession>
<accession>D3DVI4</accession>
<accession>Q53HG4</accession>
<accession>Q53RV8</accession>
<accession>Q6NSF5</accession>
<accession>Q8TB70</accession>
<accession>Q9BRU6</accession>
<sequence length="226" mass="26534">MEADASVDMFSKVLEHQLLQTTKLVEEHLDSEIQKLDQMDEDELERLKEKRLQALRKAQQQKQEWLSKGHGEYREIPSERDFFQEVKESENVVCHFYRDSTFRCKILDRHLAILSKKHLETKFLKLNVEKAPFLCERLHIKVIPTLALLKDGKTQDYVVGFTDLGNTDDFTTETLEWRLGSSDILNYSGNLMEPPFQNQKKFGTNFTKLEKKTIRGKKYDSDSDDD</sequence>
<evidence type="ECO:0000250" key="1">
    <source>
        <dbReference type="UniProtKB" id="Q9CQ79"/>
    </source>
</evidence>
<evidence type="ECO:0000269" key="2">
    <source>
    </source>
</evidence>
<evidence type="ECO:0000303" key="3">
    <source>
    </source>
</evidence>
<evidence type="ECO:0000305" key="4"/>
<evidence type="ECO:0007744" key="5">
    <source>
    </source>
</evidence>
<evidence type="ECO:0007744" key="6">
    <source>
    </source>
</evidence>
<evidence type="ECO:0007744" key="7">
    <source>
    </source>
</evidence>
<evidence type="ECO:0007744" key="8">
    <source>
    </source>
</evidence>
<evidence type="ECO:0007744" key="9">
    <source>
    </source>
</evidence>
<feature type="chain" id="PRO_0000120166" description="Thioredoxin domain-containing protein 9">
    <location>
        <begin position="1"/>
        <end position="226"/>
    </location>
</feature>
<feature type="domain" description="Thioredoxin">
    <location>
        <begin position="74"/>
        <end position="180"/>
    </location>
</feature>
<feature type="modified residue" description="Phosphoserine" evidence="5 6 7 9">
    <location>
        <position position="188"/>
    </location>
</feature>
<feature type="modified residue" description="Phosphoserine" evidence="8">
    <location>
        <position position="221"/>
    </location>
</feature>
<feature type="modified residue" description="Phosphoserine" evidence="8">
    <location>
        <position position="223"/>
    </location>
</feature>
<feature type="splice variant" id="VSP_056553" description="In isoform 2." evidence="3">
    <original>SGNLMEPPFQNQKKFGTNFTKLEKKTIRGKKYDSDSDDD</original>
    <variation>R</variation>
    <location>
        <begin position="188"/>
        <end position="226"/>
    </location>
</feature>
<feature type="sequence variant" id="VAR_058328" description="In dbSNP:rs11542369.">
    <original>L</original>
    <variation>Q</variation>
    <location>
        <position position="14"/>
    </location>
</feature>
<feature type="sequence variant" id="VAR_058329" description="In dbSNP:rs11542371.">
    <original>Q</original>
    <variation>R</variation>
    <location>
        <position position="38"/>
    </location>
</feature>
<feature type="sequence conflict" description="In Ref. 1; BAA21881." evidence="4" ref="1">
    <original>K</original>
    <variation>N</variation>
    <location>
        <position position="122"/>
    </location>
</feature>
<feature type="sequence conflict" description="In Ref. 4; BAD96336." evidence="4" ref="4">
    <original>N</original>
    <variation>D</variation>
    <location>
        <position position="190"/>
    </location>
</feature>
<feature type="sequence conflict" description="In Ref. 1; BAA21881." evidence="4" ref="1">
    <original>I</original>
    <variation>M</variation>
    <location>
        <position position="214"/>
    </location>
</feature>
<dbReference type="EMBL" id="AB006679">
    <property type="protein sequence ID" value="BAA21881.1"/>
    <property type="molecule type" value="mRNA"/>
</dbReference>
<dbReference type="EMBL" id="AK313777">
    <property type="protein sequence ID" value="BAG36515.1"/>
    <property type="molecule type" value="mRNA"/>
</dbReference>
<dbReference type="EMBL" id="CR456935">
    <property type="protein sequence ID" value="CAG33216.1"/>
    <property type="molecule type" value="mRNA"/>
</dbReference>
<dbReference type="EMBL" id="AK222616">
    <property type="protein sequence ID" value="BAD96336.1"/>
    <property type="molecule type" value="mRNA"/>
</dbReference>
<dbReference type="EMBL" id="AB451403">
    <property type="protein sequence ID" value="BAG70217.1"/>
    <property type="molecule type" value="mRNA"/>
</dbReference>
<dbReference type="EMBL" id="AC079447">
    <property type="protein sequence ID" value="AAX93257.1"/>
    <property type="molecule type" value="Genomic_DNA"/>
</dbReference>
<dbReference type="EMBL" id="CH471127">
    <property type="protein sequence ID" value="EAX01869.1"/>
    <property type="molecule type" value="Genomic_DNA"/>
</dbReference>
<dbReference type="EMBL" id="CH471127">
    <property type="protein sequence ID" value="EAX01870.1"/>
    <property type="molecule type" value="Genomic_DNA"/>
</dbReference>
<dbReference type="EMBL" id="CH471127">
    <property type="protein sequence ID" value="EAX01871.1"/>
    <property type="molecule type" value="Genomic_DNA"/>
</dbReference>
<dbReference type="EMBL" id="BC005968">
    <property type="protein sequence ID" value="AAH05968.1"/>
    <property type="molecule type" value="mRNA"/>
</dbReference>
<dbReference type="EMBL" id="BC022864">
    <property type="protein sequence ID" value="AAH22864.1"/>
    <property type="molecule type" value="mRNA"/>
</dbReference>
<dbReference type="EMBL" id="BC024223">
    <property type="protein sequence ID" value="AAH24223.2"/>
    <property type="molecule type" value="mRNA"/>
</dbReference>
<dbReference type="EMBL" id="BC070183">
    <property type="protein sequence ID" value="AAH70183.2"/>
    <property type="molecule type" value="mRNA"/>
</dbReference>
<dbReference type="CCDS" id="CCDS2044.1">
    <molecule id="O14530-1"/>
</dbReference>
<dbReference type="RefSeq" id="NP_005774.2">
    <molecule id="O14530-1"/>
    <property type="nucleotide sequence ID" value="NM_005783.3"/>
</dbReference>
<dbReference type="SMR" id="O14530"/>
<dbReference type="BioGRID" id="115487">
    <property type="interactions" value="139"/>
</dbReference>
<dbReference type="FunCoup" id="O14530">
    <property type="interactions" value="2884"/>
</dbReference>
<dbReference type="IntAct" id="O14530">
    <property type="interactions" value="89"/>
</dbReference>
<dbReference type="MINT" id="O14530"/>
<dbReference type="STRING" id="9606.ENSP00000264255"/>
<dbReference type="GlyGen" id="O14530">
    <property type="glycosylation" value="1 site, 1 O-linked glycan (1 site)"/>
</dbReference>
<dbReference type="iPTMnet" id="O14530"/>
<dbReference type="PhosphoSitePlus" id="O14530"/>
<dbReference type="BioMuta" id="TXNDC9"/>
<dbReference type="jPOST" id="O14530"/>
<dbReference type="MassIVE" id="O14530"/>
<dbReference type="PaxDb" id="9606-ENSP00000264255"/>
<dbReference type="PeptideAtlas" id="O14530"/>
<dbReference type="ProteomicsDB" id="48076">
    <molecule id="O14530-1"/>
</dbReference>
<dbReference type="ProteomicsDB" id="73969"/>
<dbReference type="Pumba" id="O14530"/>
<dbReference type="Antibodypedia" id="32814">
    <property type="antibodies" value="145 antibodies from 27 providers"/>
</dbReference>
<dbReference type="DNASU" id="10190"/>
<dbReference type="Ensembl" id="ENST00000264255.8">
    <molecule id="O14530-1"/>
    <property type="protein sequence ID" value="ENSP00000264255.3"/>
    <property type="gene ID" value="ENSG00000115514.12"/>
</dbReference>
<dbReference type="Ensembl" id="ENST00000409434.5">
    <molecule id="O14530-2"/>
    <property type="protein sequence ID" value="ENSP00000387275.1"/>
    <property type="gene ID" value="ENSG00000115514.12"/>
</dbReference>
<dbReference type="GeneID" id="10190"/>
<dbReference type="KEGG" id="hsa:10190"/>
<dbReference type="MANE-Select" id="ENST00000264255.8">
    <property type="protein sequence ID" value="ENSP00000264255.3"/>
    <property type="RefSeq nucleotide sequence ID" value="NM_005783.4"/>
    <property type="RefSeq protein sequence ID" value="NP_005774.2"/>
</dbReference>
<dbReference type="UCSC" id="uc002szz.4">
    <molecule id="O14530-1"/>
    <property type="organism name" value="human"/>
</dbReference>
<dbReference type="AGR" id="HGNC:24110"/>
<dbReference type="CTD" id="10190"/>
<dbReference type="DisGeNET" id="10190"/>
<dbReference type="GeneCards" id="TXNDC9"/>
<dbReference type="HGNC" id="HGNC:24110">
    <property type="gene designation" value="TXNDC9"/>
</dbReference>
<dbReference type="HPA" id="ENSG00000115514">
    <property type="expression patterns" value="Low tissue specificity"/>
</dbReference>
<dbReference type="MIM" id="612564">
    <property type="type" value="gene"/>
</dbReference>
<dbReference type="neXtProt" id="NX_O14530"/>
<dbReference type="OpenTargets" id="ENSG00000115514"/>
<dbReference type="PharmGKB" id="PA134957934"/>
<dbReference type="VEuPathDB" id="HostDB:ENSG00000115514"/>
<dbReference type="eggNOG" id="KOG1672">
    <property type="taxonomic scope" value="Eukaryota"/>
</dbReference>
<dbReference type="GeneTree" id="ENSGT00390000015645"/>
<dbReference type="HOGENOM" id="CLU_072378_2_0_1"/>
<dbReference type="InParanoid" id="O14530"/>
<dbReference type="OMA" id="CVIAFID"/>
<dbReference type="OrthoDB" id="10257948at2759"/>
<dbReference type="PAN-GO" id="O14530">
    <property type="GO annotations" value="2 GO annotations based on evolutionary models"/>
</dbReference>
<dbReference type="PhylomeDB" id="O14530"/>
<dbReference type="TreeFam" id="TF313442"/>
<dbReference type="PathwayCommons" id="O14530"/>
<dbReference type="SignaLink" id="O14530"/>
<dbReference type="BioGRID-ORCS" id="10190">
    <property type="hits" value="38 hits in 1123 CRISPR screens"/>
</dbReference>
<dbReference type="ChiTaRS" id="TXNDC9">
    <property type="organism name" value="human"/>
</dbReference>
<dbReference type="GeneWiki" id="TXNDC9"/>
<dbReference type="GenomeRNAi" id="10190"/>
<dbReference type="Pharos" id="O14530">
    <property type="development level" value="Tbio"/>
</dbReference>
<dbReference type="PRO" id="PR:O14530"/>
<dbReference type="Proteomes" id="UP000005640">
    <property type="component" value="Chromosome 2"/>
</dbReference>
<dbReference type="RNAct" id="O14530">
    <property type="molecule type" value="protein"/>
</dbReference>
<dbReference type="Bgee" id="ENSG00000115514">
    <property type="expression patterns" value="Expressed in oocyte and 206 other cell types or tissues"/>
</dbReference>
<dbReference type="ExpressionAtlas" id="O14530">
    <property type="expression patterns" value="baseline and differential"/>
</dbReference>
<dbReference type="GO" id="GO:0005813">
    <property type="term" value="C:centrosome"/>
    <property type="evidence" value="ECO:0007669"/>
    <property type="project" value="UniProtKB-SubCell"/>
</dbReference>
<dbReference type="GO" id="GO:0005737">
    <property type="term" value="C:cytoplasm"/>
    <property type="evidence" value="ECO:0000318"/>
    <property type="project" value="GO_Central"/>
</dbReference>
<dbReference type="GO" id="GO:0005829">
    <property type="term" value="C:cytosol"/>
    <property type="evidence" value="ECO:0000314"/>
    <property type="project" value="HPA"/>
</dbReference>
<dbReference type="GO" id="GO:0030496">
    <property type="term" value="C:midbody"/>
    <property type="evidence" value="ECO:0007669"/>
    <property type="project" value="UniProtKB-SubCell"/>
</dbReference>
<dbReference type="GO" id="GO:0005634">
    <property type="term" value="C:nucleus"/>
    <property type="evidence" value="ECO:0007669"/>
    <property type="project" value="UniProtKB-SubCell"/>
</dbReference>
<dbReference type="GO" id="GO:0045296">
    <property type="term" value="F:cadherin binding"/>
    <property type="evidence" value="ECO:0007005"/>
    <property type="project" value="BHF-UCL"/>
</dbReference>
<dbReference type="GO" id="GO:0000226">
    <property type="term" value="P:microtubule cytoskeleton organization"/>
    <property type="evidence" value="ECO:0000318"/>
    <property type="project" value="GO_Central"/>
</dbReference>
<dbReference type="CDD" id="cd02989">
    <property type="entry name" value="Phd_like_TxnDC9"/>
    <property type="match status" value="1"/>
</dbReference>
<dbReference type="FunFam" id="3.40.30.10:FF:000141">
    <property type="entry name" value="Thioredoxin domain-containing protein 9"/>
    <property type="match status" value="1"/>
</dbReference>
<dbReference type="Gene3D" id="3.40.30.10">
    <property type="entry name" value="Glutaredoxin"/>
    <property type="match status" value="1"/>
</dbReference>
<dbReference type="InterPro" id="IPR036249">
    <property type="entry name" value="Thioredoxin-like_sf"/>
</dbReference>
<dbReference type="InterPro" id="IPR013766">
    <property type="entry name" value="Thioredoxin_domain"/>
</dbReference>
<dbReference type="PANTHER" id="PTHR21148">
    <property type="entry name" value="THIOREDOXIN DOMAIN-CONTAINING PROTEIN 9"/>
    <property type="match status" value="1"/>
</dbReference>
<dbReference type="Pfam" id="PF00085">
    <property type="entry name" value="Thioredoxin"/>
    <property type="match status" value="1"/>
</dbReference>
<dbReference type="SUPFAM" id="SSF52833">
    <property type="entry name" value="Thioredoxin-like"/>
    <property type="match status" value="1"/>
</dbReference>
<gene>
    <name type="primary">TXNDC9</name>
    <name type="synonym">APACD</name>
</gene>
<protein>
    <recommendedName>
        <fullName>Thioredoxin domain-containing protein 9</fullName>
    </recommendedName>
    <alternativeName>
        <fullName>ATP-binding protein associated with cell differentiation</fullName>
    </alternativeName>
    <alternativeName>
        <fullName>Protein 1-4</fullName>
    </alternativeName>
</protein>
<keyword id="KW-0025">Alternative splicing</keyword>
<keyword id="KW-0963">Cytoplasm</keyword>
<keyword id="KW-0206">Cytoskeleton</keyword>
<keyword id="KW-0539">Nucleus</keyword>
<keyword id="KW-0597">Phosphoprotein</keyword>
<keyword id="KW-1267">Proteomics identification</keyword>
<keyword id="KW-1185">Reference proteome</keyword>
<proteinExistence type="evidence at protein level"/>
<name>TXND9_HUMAN</name>
<organism>
    <name type="scientific">Homo sapiens</name>
    <name type="common">Human</name>
    <dbReference type="NCBI Taxonomy" id="9606"/>
    <lineage>
        <taxon>Eukaryota</taxon>
        <taxon>Metazoa</taxon>
        <taxon>Chordata</taxon>
        <taxon>Craniata</taxon>
        <taxon>Vertebrata</taxon>
        <taxon>Euteleostomi</taxon>
        <taxon>Mammalia</taxon>
        <taxon>Eutheria</taxon>
        <taxon>Euarchontoglires</taxon>
        <taxon>Primates</taxon>
        <taxon>Haplorrhini</taxon>
        <taxon>Catarrhini</taxon>
        <taxon>Hominidae</taxon>
        <taxon>Homo</taxon>
    </lineage>
</organism>
<reference key="1">
    <citation type="submission" date="1997-08" db="EMBL/GenBank/DDBJ databases">
        <title>Differential expression of 1-4 gene in functionally distinct ME-1 subclones.</title>
        <authorList>
            <person name="Shiosaka T."/>
        </authorList>
    </citation>
    <scope>NUCLEOTIDE SEQUENCE [MRNA] (ISOFORM 1)</scope>
    <source>
        <tissue>Leukemia</tissue>
    </source>
</reference>
<reference key="2">
    <citation type="journal article" date="2004" name="Nat. Genet.">
        <title>Complete sequencing and characterization of 21,243 full-length human cDNAs.</title>
        <authorList>
            <person name="Ota T."/>
            <person name="Suzuki Y."/>
            <person name="Nishikawa T."/>
            <person name="Otsuki T."/>
            <person name="Sugiyama T."/>
            <person name="Irie R."/>
            <person name="Wakamatsu A."/>
            <person name="Hayashi K."/>
            <person name="Sato H."/>
            <person name="Nagai K."/>
            <person name="Kimura K."/>
            <person name="Makita H."/>
            <person name="Sekine M."/>
            <person name="Obayashi M."/>
            <person name="Nishi T."/>
            <person name="Shibahara T."/>
            <person name="Tanaka T."/>
            <person name="Ishii S."/>
            <person name="Yamamoto J."/>
            <person name="Saito K."/>
            <person name="Kawai Y."/>
            <person name="Isono Y."/>
            <person name="Nakamura Y."/>
            <person name="Nagahari K."/>
            <person name="Murakami K."/>
            <person name="Yasuda T."/>
            <person name="Iwayanagi T."/>
            <person name="Wagatsuma M."/>
            <person name="Shiratori A."/>
            <person name="Sudo H."/>
            <person name="Hosoiri T."/>
            <person name="Kaku Y."/>
            <person name="Kodaira H."/>
            <person name="Kondo H."/>
            <person name="Sugawara M."/>
            <person name="Takahashi M."/>
            <person name="Kanda K."/>
            <person name="Yokoi T."/>
            <person name="Furuya T."/>
            <person name="Kikkawa E."/>
            <person name="Omura Y."/>
            <person name="Abe K."/>
            <person name="Kamihara K."/>
            <person name="Katsuta N."/>
            <person name="Sato K."/>
            <person name="Tanikawa M."/>
            <person name="Yamazaki M."/>
            <person name="Ninomiya K."/>
            <person name="Ishibashi T."/>
            <person name="Yamashita H."/>
            <person name="Murakawa K."/>
            <person name="Fujimori K."/>
            <person name="Tanai H."/>
            <person name="Kimata M."/>
            <person name="Watanabe M."/>
            <person name="Hiraoka S."/>
            <person name="Chiba Y."/>
            <person name="Ishida S."/>
            <person name="Ono Y."/>
            <person name="Takiguchi S."/>
            <person name="Watanabe S."/>
            <person name="Yosida M."/>
            <person name="Hotuta T."/>
            <person name="Kusano J."/>
            <person name="Kanehori K."/>
            <person name="Takahashi-Fujii A."/>
            <person name="Hara H."/>
            <person name="Tanase T.-O."/>
            <person name="Nomura Y."/>
            <person name="Togiya S."/>
            <person name="Komai F."/>
            <person name="Hara R."/>
            <person name="Takeuchi K."/>
            <person name="Arita M."/>
            <person name="Imose N."/>
            <person name="Musashino K."/>
            <person name="Yuuki H."/>
            <person name="Oshima A."/>
            <person name="Sasaki N."/>
            <person name="Aotsuka S."/>
            <person name="Yoshikawa Y."/>
            <person name="Matsunawa H."/>
            <person name="Ichihara T."/>
            <person name="Shiohata N."/>
            <person name="Sano S."/>
            <person name="Moriya S."/>
            <person name="Momiyama H."/>
            <person name="Satoh N."/>
            <person name="Takami S."/>
            <person name="Terashima Y."/>
            <person name="Suzuki O."/>
            <person name="Nakagawa S."/>
            <person name="Senoh A."/>
            <person name="Mizoguchi H."/>
            <person name="Goto Y."/>
            <person name="Shimizu F."/>
            <person name="Wakebe H."/>
            <person name="Hishigaki H."/>
            <person name="Watanabe T."/>
            <person name="Sugiyama A."/>
            <person name="Takemoto M."/>
            <person name="Kawakami B."/>
            <person name="Yamazaki M."/>
            <person name="Watanabe K."/>
            <person name="Kumagai A."/>
            <person name="Itakura S."/>
            <person name="Fukuzumi Y."/>
            <person name="Fujimori Y."/>
            <person name="Komiyama M."/>
            <person name="Tashiro H."/>
            <person name="Tanigami A."/>
            <person name="Fujiwara T."/>
            <person name="Ono T."/>
            <person name="Yamada K."/>
            <person name="Fujii Y."/>
            <person name="Ozaki K."/>
            <person name="Hirao M."/>
            <person name="Ohmori Y."/>
            <person name="Kawabata A."/>
            <person name="Hikiji T."/>
            <person name="Kobatake N."/>
            <person name="Inagaki H."/>
            <person name="Ikema Y."/>
            <person name="Okamoto S."/>
            <person name="Okitani R."/>
            <person name="Kawakami T."/>
            <person name="Noguchi S."/>
            <person name="Itoh T."/>
            <person name="Shigeta K."/>
            <person name="Senba T."/>
            <person name="Matsumura K."/>
            <person name="Nakajima Y."/>
            <person name="Mizuno T."/>
            <person name="Morinaga M."/>
            <person name="Sasaki M."/>
            <person name="Togashi T."/>
            <person name="Oyama M."/>
            <person name="Hata H."/>
            <person name="Watanabe M."/>
            <person name="Komatsu T."/>
            <person name="Mizushima-Sugano J."/>
            <person name="Satoh T."/>
            <person name="Shirai Y."/>
            <person name="Takahashi Y."/>
            <person name="Nakagawa K."/>
            <person name="Okumura K."/>
            <person name="Nagase T."/>
            <person name="Nomura N."/>
            <person name="Kikuchi H."/>
            <person name="Masuho Y."/>
            <person name="Yamashita R."/>
            <person name="Nakai K."/>
            <person name="Yada T."/>
            <person name="Nakamura Y."/>
            <person name="Ohara O."/>
            <person name="Isogai T."/>
            <person name="Sugano S."/>
        </authorList>
    </citation>
    <scope>NUCLEOTIDE SEQUENCE [LARGE SCALE MRNA] (ISOFORM 1)</scope>
    <source>
        <tissue>Testis</tissue>
    </source>
</reference>
<reference key="3">
    <citation type="submission" date="2004-06" db="EMBL/GenBank/DDBJ databases">
        <title>Cloning of human full open reading frames in Gateway(TM) system entry vector (pDONR201).</title>
        <authorList>
            <person name="Ebert L."/>
            <person name="Schick M."/>
            <person name="Neubert P."/>
            <person name="Schatten R."/>
            <person name="Henze S."/>
            <person name="Korn B."/>
        </authorList>
    </citation>
    <scope>NUCLEOTIDE SEQUENCE [LARGE SCALE MRNA] (ISOFORM 1)</scope>
</reference>
<reference key="4">
    <citation type="submission" date="2005-04" db="EMBL/GenBank/DDBJ databases">
        <authorList>
            <person name="Suzuki Y."/>
            <person name="Sugano S."/>
            <person name="Totoki Y."/>
            <person name="Toyoda A."/>
            <person name="Takeda T."/>
            <person name="Sakaki Y."/>
            <person name="Tanaka A."/>
            <person name="Yokoyama S."/>
        </authorList>
    </citation>
    <scope>NUCLEOTIDE SEQUENCE [LARGE SCALE MRNA] (ISOFORM 1)</scope>
    <source>
        <tissue>Cerebellum</tissue>
    </source>
</reference>
<reference key="5">
    <citation type="journal article" date="2008" name="Nat. Methods">
        <title>Human protein factory for converting the transcriptome into an in vitro-expressed proteome.</title>
        <authorList>
            <person name="Goshima N."/>
            <person name="Kawamura Y."/>
            <person name="Fukumoto A."/>
            <person name="Miura A."/>
            <person name="Honma R."/>
            <person name="Satoh R."/>
            <person name="Wakamatsu A."/>
            <person name="Yamamoto J."/>
            <person name="Kimura K."/>
            <person name="Nishikawa T."/>
            <person name="Andoh T."/>
            <person name="Iida Y."/>
            <person name="Ishikawa K."/>
            <person name="Ito E."/>
            <person name="Kagawa N."/>
            <person name="Kaminaga C."/>
            <person name="Kanehori K."/>
            <person name="Kawakami B."/>
            <person name="Kenmochi K."/>
            <person name="Kimura R."/>
            <person name="Kobayashi M."/>
            <person name="Kuroita T."/>
            <person name="Kuwayama H."/>
            <person name="Maruyama Y."/>
            <person name="Matsuo K."/>
            <person name="Minami K."/>
            <person name="Mitsubori M."/>
            <person name="Mori M."/>
            <person name="Morishita R."/>
            <person name="Murase A."/>
            <person name="Nishikawa A."/>
            <person name="Nishikawa S."/>
            <person name="Okamoto T."/>
            <person name="Sakagami N."/>
            <person name="Sakamoto Y."/>
            <person name="Sasaki Y."/>
            <person name="Seki T."/>
            <person name="Sono S."/>
            <person name="Sugiyama A."/>
            <person name="Sumiya T."/>
            <person name="Takayama T."/>
            <person name="Takayama Y."/>
            <person name="Takeda H."/>
            <person name="Togashi T."/>
            <person name="Yahata K."/>
            <person name="Yamada H."/>
            <person name="Yanagisawa Y."/>
            <person name="Endo Y."/>
            <person name="Imamoto F."/>
            <person name="Kisu Y."/>
            <person name="Tanaka S."/>
            <person name="Isogai T."/>
            <person name="Imai J."/>
            <person name="Watanabe S."/>
            <person name="Nomura N."/>
        </authorList>
    </citation>
    <scope>NUCLEOTIDE SEQUENCE [LARGE SCALE MRNA] (ISOFORM 1)</scope>
</reference>
<reference key="6">
    <citation type="journal article" date="2005" name="Nature">
        <title>Generation and annotation of the DNA sequences of human chromosomes 2 and 4.</title>
        <authorList>
            <person name="Hillier L.W."/>
            <person name="Graves T.A."/>
            <person name="Fulton R.S."/>
            <person name="Fulton L.A."/>
            <person name="Pepin K.H."/>
            <person name="Minx P."/>
            <person name="Wagner-McPherson C."/>
            <person name="Layman D."/>
            <person name="Wylie K."/>
            <person name="Sekhon M."/>
            <person name="Becker M.C."/>
            <person name="Fewell G.A."/>
            <person name="Delehaunty K.D."/>
            <person name="Miner T.L."/>
            <person name="Nash W.E."/>
            <person name="Kremitzki C."/>
            <person name="Oddy L."/>
            <person name="Du H."/>
            <person name="Sun H."/>
            <person name="Bradshaw-Cordum H."/>
            <person name="Ali J."/>
            <person name="Carter J."/>
            <person name="Cordes M."/>
            <person name="Harris A."/>
            <person name="Isak A."/>
            <person name="van Brunt A."/>
            <person name="Nguyen C."/>
            <person name="Du F."/>
            <person name="Courtney L."/>
            <person name="Kalicki J."/>
            <person name="Ozersky P."/>
            <person name="Abbott S."/>
            <person name="Armstrong J."/>
            <person name="Belter E.A."/>
            <person name="Caruso L."/>
            <person name="Cedroni M."/>
            <person name="Cotton M."/>
            <person name="Davidson T."/>
            <person name="Desai A."/>
            <person name="Elliott G."/>
            <person name="Erb T."/>
            <person name="Fronick C."/>
            <person name="Gaige T."/>
            <person name="Haakenson W."/>
            <person name="Haglund K."/>
            <person name="Holmes A."/>
            <person name="Harkins R."/>
            <person name="Kim K."/>
            <person name="Kruchowski S.S."/>
            <person name="Strong C.M."/>
            <person name="Grewal N."/>
            <person name="Goyea E."/>
            <person name="Hou S."/>
            <person name="Levy A."/>
            <person name="Martinka S."/>
            <person name="Mead K."/>
            <person name="McLellan M.D."/>
            <person name="Meyer R."/>
            <person name="Randall-Maher J."/>
            <person name="Tomlinson C."/>
            <person name="Dauphin-Kohlberg S."/>
            <person name="Kozlowicz-Reilly A."/>
            <person name="Shah N."/>
            <person name="Swearengen-Shahid S."/>
            <person name="Snider J."/>
            <person name="Strong J.T."/>
            <person name="Thompson J."/>
            <person name="Yoakum M."/>
            <person name="Leonard S."/>
            <person name="Pearman C."/>
            <person name="Trani L."/>
            <person name="Radionenko M."/>
            <person name="Waligorski J.E."/>
            <person name="Wang C."/>
            <person name="Rock S.M."/>
            <person name="Tin-Wollam A.-M."/>
            <person name="Maupin R."/>
            <person name="Latreille P."/>
            <person name="Wendl M.C."/>
            <person name="Yang S.-P."/>
            <person name="Pohl C."/>
            <person name="Wallis J.W."/>
            <person name="Spieth J."/>
            <person name="Bieri T.A."/>
            <person name="Berkowicz N."/>
            <person name="Nelson J.O."/>
            <person name="Osborne J."/>
            <person name="Ding L."/>
            <person name="Meyer R."/>
            <person name="Sabo A."/>
            <person name="Shotland Y."/>
            <person name="Sinha P."/>
            <person name="Wohldmann P.E."/>
            <person name="Cook L.L."/>
            <person name="Hickenbotham M.T."/>
            <person name="Eldred J."/>
            <person name="Williams D."/>
            <person name="Jones T.A."/>
            <person name="She X."/>
            <person name="Ciccarelli F.D."/>
            <person name="Izaurralde E."/>
            <person name="Taylor J."/>
            <person name="Schmutz J."/>
            <person name="Myers R.M."/>
            <person name="Cox D.R."/>
            <person name="Huang X."/>
            <person name="McPherson J.D."/>
            <person name="Mardis E.R."/>
            <person name="Clifton S.W."/>
            <person name="Warren W.C."/>
            <person name="Chinwalla A.T."/>
            <person name="Eddy S.R."/>
            <person name="Marra M.A."/>
            <person name="Ovcharenko I."/>
            <person name="Furey T.S."/>
            <person name="Miller W."/>
            <person name="Eichler E.E."/>
            <person name="Bork P."/>
            <person name="Suyama M."/>
            <person name="Torrents D."/>
            <person name="Waterston R.H."/>
            <person name="Wilson R.K."/>
        </authorList>
    </citation>
    <scope>NUCLEOTIDE SEQUENCE [LARGE SCALE GENOMIC DNA]</scope>
</reference>
<reference key="7">
    <citation type="submission" date="2005-09" db="EMBL/GenBank/DDBJ databases">
        <authorList>
            <person name="Mural R.J."/>
            <person name="Istrail S."/>
            <person name="Sutton G.G."/>
            <person name="Florea L."/>
            <person name="Halpern A.L."/>
            <person name="Mobarry C.M."/>
            <person name="Lippert R."/>
            <person name="Walenz B."/>
            <person name="Shatkay H."/>
            <person name="Dew I."/>
            <person name="Miller J.R."/>
            <person name="Flanigan M.J."/>
            <person name="Edwards N.J."/>
            <person name="Bolanos R."/>
            <person name="Fasulo D."/>
            <person name="Halldorsson B.V."/>
            <person name="Hannenhalli S."/>
            <person name="Turner R."/>
            <person name="Yooseph S."/>
            <person name="Lu F."/>
            <person name="Nusskern D.R."/>
            <person name="Shue B.C."/>
            <person name="Zheng X.H."/>
            <person name="Zhong F."/>
            <person name="Delcher A.L."/>
            <person name="Huson D.H."/>
            <person name="Kravitz S.A."/>
            <person name="Mouchard L."/>
            <person name="Reinert K."/>
            <person name="Remington K.A."/>
            <person name="Clark A.G."/>
            <person name="Waterman M.S."/>
            <person name="Eichler E.E."/>
            <person name="Adams M.D."/>
            <person name="Hunkapiller M.W."/>
            <person name="Myers E.W."/>
            <person name="Venter J.C."/>
        </authorList>
    </citation>
    <scope>NUCLEOTIDE SEQUENCE [LARGE SCALE GENOMIC DNA]</scope>
</reference>
<reference key="8">
    <citation type="journal article" date="2004" name="Genome Res.">
        <title>The status, quality, and expansion of the NIH full-length cDNA project: the Mammalian Gene Collection (MGC).</title>
        <authorList>
            <consortium name="The MGC Project Team"/>
        </authorList>
    </citation>
    <scope>NUCLEOTIDE SEQUENCE [LARGE SCALE MRNA] (ISOFORMS 1 AND 2)</scope>
    <source>
        <tissue>Bone marrow</tissue>
        <tissue>Brain</tissue>
        <tissue>Kidney</tissue>
    </source>
</reference>
<reference key="9">
    <citation type="journal article" date="2006" name="J. Biol. Chem.">
        <title>PhLP3 modulates CCT-mediated actin and tubulin folding via ternary complexes with substrates.</title>
        <authorList>
            <person name="Stirling P.C."/>
            <person name="Cuellar J."/>
            <person name="Alfaro G.A."/>
            <person name="El Khadali F."/>
            <person name="Beh C.T."/>
            <person name="Valpuesta J.M."/>
            <person name="Melki R."/>
            <person name="Leroux M.R."/>
        </authorList>
    </citation>
    <scope>FUNCTION</scope>
    <scope>INTERACTION WITH TCP1 COMPLEX</scope>
</reference>
<reference key="10">
    <citation type="journal article" date="2008" name="Proc. Natl. Acad. Sci. U.S.A.">
        <title>A quantitative atlas of mitotic phosphorylation.</title>
        <authorList>
            <person name="Dephoure N."/>
            <person name="Zhou C."/>
            <person name="Villen J."/>
            <person name="Beausoleil S.A."/>
            <person name="Bakalarski C.E."/>
            <person name="Elledge S.J."/>
            <person name="Gygi S.P."/>
        </authorList>
    </citation>
    <scope>PHOSPHORYLATION [LARGE SCALE ANALYSIS] AT SER-188</scope>
    <scope>IDENTIFICATION BY MASS SPECTROMETRY [LARGE SCALE ANALYSIS]</scope>
    <source>
        <tissue>Cervix carcinoma</tissue>
    </source>
</reference>
<reference key="11">
    <citation type="journal article" date="2009" name="Sci. Signal.">
        <title>Quantitative phosphoproteomic analysis of T cell receptor signaling reveals system-wide modulation of protein-protein interactions.</title>
        <authorList>
            <person name="Mayya V."/>
            <person name="Lundgren D.H."/>
            <person name="Hwang S.-I."/>
            <person name="Rezaul K."/>
            <person name="Wu L."/>
            <person name="Eng J.K."/>
            <person name="Rodionov V."/>
            <person name="Han D.K."/>
        </authorList>
    </citation>
    <scope>PHOSPHORYLATION [LARGE SCALE ANALYSIS] AT SER-188</scope>
    <scope>IDENTIFICATION BY MASS SPECTROMETRY [LARGE SCALE ANALYSIS]</scope>
    <source>
        <tissue>Leukemic T-cell</tissue>
    </source>
</reference>
<reference key="12">
    <citation type="journal article" date="2010" name="Sci. Signal.">
        <title>Quantitative phosphoproteomics reveals widespread full phosphorylation site occupancy during mitosis.</title>
        <authorList>
            <person name="Olsen J.V."/>
            <person name="Vermeulen M."/>
            <person name="Santamaria A."/>
            <person name="Kumar C."/>
            <person name="Miller M.L."/>
            <person name="Jensen L.J."/>
            <person name="Gnad F."/>
            <person name="Cox J."/>
            <person name="Jensen T.S."/>
            <person name="Nigg E.A."/>
            <person name="Brunak S."/>
            <person name="Mann M."/>
        </authorList>
    </citation>
    <scope>PHOSPHORYLATION [LARGE SCALE ANALYSIS] AT SER-188</scope>
    <scope>IDENTIFICATION BY MASS SPECTROMETRY [LARGE SCALE ANALYSIS]</scope>
    <source>
        <tissue>Cervix carcinoma</tissue>
    </source>
</reference>
<reference key="13">
    <citation type="journal article" date="2011" name="BMC Syst. Biol.">
        <title>Initial characterization of the human central proteome.</title>
        <authorList>
            <person name="Burkard T.R."/>
            <person name="Planyavsky M."/>
            <person name="Kaupe I."/>
            <person name="Breitwieser F.P."/>
            <person name="Buerckstuemmer T."/>
            <person name="Bennett K.L."/>
            <person name="Superti-Furga G."/>
            <person name="Colinge J."/>
        </authorList>
    </citation>
    <scope>IDENTIFICATION BY MASS SPECTROMETRY [LARGE SCALE ANALYSIS]</scope>
</reference>
<reference key="14">
    <citation type="journal article" date="2011" name="Sci. Signal.">
        <title>System-wide temporal characterization of the proteome and phosphoproteome of human embryonic stem cell differentiation.</title>
        <authorList>
            <person name="Rigbolt K.T."/>
            <person name="Prokhorova T.A."/>
            <person name="Akimov V."/>
            <person name="Henningsen J."/>
            <person name="Johansen P.T."/>
            <person name="Kratchmarova I."/>
            <person name="Kassem M."/>
            <person name="Mann M."/>
            <person name="Olsen J.V."/>
            <person name="Blagoev B."/>
        </authorList>
    </citation>
    <scope>PHOSPHORYLATION [LARGE SCALE ANALYSIS] AT SER-221 AND SER-223</scope>
    <scope>IDENTIFICATION BY MASS SPECTROMETRY [LARGE SCALE ANALYSIS]</scope>
</reference>
<reference key="15">
    <citation type="journal article" date="2013" name="J. Proteome Res.">
        <title>Toward a comprehensive characterization of a human cancer cell phosphoproteome.</title>
        <authorList>
            <person name="Zhou H."/>
            <person name="Di Palma S."/>
            <person name="Preisinger C."/>
            <person name="Peng M."/>
            <person name="Polat A.N."/>
            <person name="Heck A.J."/>
            <person name="Mohammed S."/>
        </authorList>
    </citation>
    <scope>PHOSPHORYLATION [LARGE SCALE ANALYSIS] AT SER-188</scope>
    <scope>IDENTIFICATION BY MASS SPECTROMETRY [LARGE SCALE ANALYSIS]</scope>
    <source>
        <tissue>Cervix carcinoma</tissue>
        <tissue>Erythroleukemia</tissue>
    </source>
</reference>